<protein>
    <recommendedName>
        <fullName>Protein trichome birefringence-like 31</fullName>
    </recommendedName>
</protein>
<keyword id="KW-0472">Membrane</keyword>
<keyword id="KW-1185">Reference proteome</keyword>
<keyword id="KW-0735">Signal-anchor</keyword>
<keyword id="KW-0812">Transmembrane</keyword>
<keyword id="KW-1133">Transmembrane helix</keyword>
<reference key="1">
    <citation type="journal article" date="2000" name="Nature">
        <title>Sequence and analysis of chromosome 1 of the plant Arabidopsis thaliana.</title>
        <authorList>
            <person name="Theologis A."/>
            <person name="Ecker J.R."/>
            <person name="Palm C.J."/>
            <person name="Federspiel N.A."/>
            <person name="Kaul S."/>
            <person name="White O."/>
            <person name="Alonso J."/>
            <person name="Altafi H."/>
            <person name="Araujo R."/>
            <person name="Bowman C.L."/>
            <person name="Brooks S.Y."/>
            <person name="Buehler E."/>
            <person name="Chan A."/>
            <person name="Chao Q."/>
            <person name="Chen H."/>
            <person name="Cheuk R.F."/>
            <person name="Chin C.W."/>
            <person name="Chung M.K."/>
            <person name="Conn L."/>
            <person name="Conway A.B."/>
            <person name="Conway A.R."/>
            <person name="Creasy T.H."/>
            <person name="Dewar K."/>
            <person name="Dunn P."/>
            <person name="Etgu P."/>
            <person name="Feldblyum T.V."/>
            <person name="Feng J.-D."/>
            <person name="Fong B."/>
            <person name="Fujii C.Y."/>
            <person name="Gill J.E."/>
            <person name="Goldsmith A.D."/>
            <person name="Haas B."/>
            <person name="Hansen N.F."/>
            <person name="Hughes B."/>
            <person name="Huizar L."/>
            <person name="Hunter J.L."/>
            <person name="Jenkins J."/>
            <person name="Johnson-Hopson C."/>
            <person name="Khan S."/>
            <person name="Khaykin E."/>
            <person name="Kim C.J."/>
            <person name="Koo H.L."/>
            <person name="Kremenetskaia I."/>
            <person name="Kurtz D.B."/>
            <person name="Kwan A."/>
            <person name="Lam B."/>
            <person name="Langin-Hooper S."/>
            <person name="Lee A."/>
            <person name="Lee J.M."/>
            <person name="Lenz C.A."/>
            <person name="Li J.H."/>
            <person name="Li Y.-P."/>
            <person name="Lin X."/>
            <person name="Liu S.X."/>
            <person name="Liu Z.A."/>
            <person name="Luros J.S."/>
            <person name="Maiti R."/>
            <person name="Marziali A."/>
            <person name="Militscher J."/>
            <person name="Miranda M."/>
            <person name="Nguyen M."/>
            <person name="Nierman W.C."/>
            <person name="Osborne B.I."/>
            <person name="Pai G."/>
            <person name="Peterson J."/>
            <person name="Pham P.K."/>
            <person name="Rizzo M."/>
            <person name="Rooney T."/>
            <person name="Rowley D."/>
            <person name="Sakano H."/>
            <person name="Salzberg S.L."/>
            <person name="Schwartz J.R."/>
            <person name="Shinn P."/>
            <person name="Southwick A.M."/>
            <person name="Sun H."/>
            <person name="Tallon L.J."/>
            <person name="Tambunga G."/>
            <person name="Toriumi M.J."/>
            <person name="Town C.D."/>
            <person name="Utterback T."/>
            <person name="Van Aken S."/>
            <person name="Vaysberg M."/>
            <person name="Vysotskaia V.S."/>
            <person name="Walker M."/>
            <person name="Wu D."/>
            <person name="Yu G."/>
            <person name="Fraser C.M."/>
            <person name="Venter J.C."/>
            <person name="Davis R.W."/>
        </authorList>
    </citation>
    <scope>NUCLEOTIDE SEQUENCE [LARGE SCALE GENOMIC DNA]</scope>
    <source>
        <strain>cv. Columbia</strain>
    </source>
</reference>
<reference key="2">
    <citation type="journal article" date="2017" name="Plant J.">
        <title>Araport11: a complete reannotation of the Arabidopsis thaliana reference genome.</title>
        <authorList>
            <person name="Cheng C.Y."/>
            <person name="Krishnakumar V."/>
            <person name="Chan A.P."/>
            <person name="Thibaud-Nissen F."/>
            <person name="Schobel S."/>
            <person name="Town C.D."/>
        </authorList>
    </citation>
    <scope>GENOME REANNOTATION</scope>
    <source>
        <strain>cv. Columbia</strain>
    </source>
</reference>
<reference key="3">
    <citation type="journal article" date="2006" name="Plant Biotechnol. J.">
        <title>Simultaneous high-throughput recombinational cloning of open reading frames in closed and open configurations.</title>
        <authorList>
            <person name="Underwood B.A."/>
            <person name="Vanderhaeghen R."/>
            <person name="Whitford R."/>
            <person name="Town C.D."/>
            <person name="Hilson P."/>
        </authorList>
    </citation>
    <scope>NUCLEOTIDE SEQUENCE [LARGE SCALE MRNA]</scope>
    <source>
        <strain>cv. Columbia</strain>
    </source>
</reference>
<reference key="4">
    <citation type="journal article" date="2007" name="Plant J.">
        <title>Arabidopsis ESK1 encodes a novel regulator of freezing tolerance.</title>
        <authorList>
            <person name="Xin Z."/>
            <person name="Mandaokar A."/>
            <person name="Chen J."/>
            <person name="Last R.L."/>
            <person name="Browse J."/>
        </authorList>
    </citation>
    <scope>GENE FAMILY</scope>
    <source>
        <strain>cv. Columbia</strain>
    </source>
</reference>
<reference key="5">
    <citation type="journal article" date="2010" name="Plant Physiol.">
        <title>TRICHOME BIREFRINGENCE and its homolog AT5G01360 encode plant-specific DUF231 proteins required for cellulose biosynthesis in Arabidopsis.</title>
        <authorList>
            <person name="Bischoff V."/>
            <person name="Nita S."/>
            <person name="Neumetzler L."/>
            <person name="Schindelasch D."/>
            <person name="Urbain A."/>
            <person name="Eshed R."/>
            <person name="Persson S."/>
            <person name="Delmer D."/>
            <person name="Scheible W.R."/>
        </authorList>
    </citation>
    <scope>GENE FAMILY</scope>
    <scope>NOMENCLATURE</scope>
</reference>
<reference key="6">
    <citation type="journal article" date="2010" name="Plant Signal. Behav.">
        <title>Involvement of TBL/DUF231 proteins into cell wall biology.</title>
        <authorList>
            <person name="Bischoff V."/>
            <person name="Selbig J."/>
            <person name="Scheible W.R."/>
        </authorList>
    </citation>
    <scope>3D-STRUCTURE MODELING</scope>
</reference>
<comment type="function">
    <text evidence="1 2">May act as a bridging protein that binds pectin and other cell wall polysaccharides. Probably involved in maintaining esterification of pectins (By similarity). May be involved in the specific O-acetylation of cell wall polymers (By similarity).</text>
</comment>
<comment type="subcellular location">
    <subcellularLocation>
        <location evidence="4">Membrane</location>
        <topology evidence="4">Single-pass type II membrane protein</topology>
    </subcellularLocation>
</comment>
<comment type="miscellaneous">
    <text evidence="5">Contains 2 motifs that are conserved in esterases, but it is unlikely that this protein belongs to the catalytically active pectin esterases.</text>
</comment>
<comment type="similarity">
    <text evidence="4">Belongs to the PC-esterase family. TBL subfamily.</text>
</comment>
<comment type="sequence caution" evidence="4">
    <conflict type="erroneous gene model prediction">
        <sequence resource="EMBL-CDS" id="AAD55661"/>
    </conflict>
</comment>
<comment type="sequence caution" evidence="4">
    <conflict type="erroneous gene model prediction">
        <sequence resource="EMBL-CDS" id="AAG52129"/>
    </conflict>
</comment>
<comment type="sequence caution" evidence="4">
    <conflict type="erroneous termination">
        <sequence resource="EMBL-CDS" id="ABK28465"/>
    </conflict>
    <text>Extended C-terminus.</text>
</comment>
<name>TBL31_ARATH</name>
<gene>
    <name type="primary">TBL31</name>
    <name type="ordered locus">At1g73140</name>
    <name type="ORF">F3N23.34</name>
</gene>
<evidence type="ECO:0000250" key="1">
    <source>
        <dbReference type="UniProtKB" id="Q9FG35"/>
    </source>
</evidence>
<evidence type="ECO:0000250" key="2">
    <source>
        <dbReference type="UniProtKB" id="Q9LY46"/>
    </source>
</evidence>
<evidence type="ECO:0000255" key="3"/>
<evidence type="ECO:0000305" key="4"/>
<evidence type="ECO:0000305" key="5">
    <source>
    </source>
</evidence>
<organism>
    <name type="scientific">Arabidopsis thaliana</name>
    <name type="common">Mouse-ear cress</name>
    <dbReference type="NCBI Taxonomy" id="3702"/>
    <lineage>
        <taxon>Eukaryota</taxon>
        <taxon>Viridiplantae</taxon>
        <taxon>Streptophyta</taxon>
        <taxon>Embryophyta</taxon>
        <taxon>Tracheophyta</taxon>
        <taxon>Spermatophyta</taxon>
        <taxon>Magnoliopsida</taxon>
        <taxon>eudicotyledons</taxon>
        <taxon>Gunneridae</taxon>
        <taxon>Pentapetalae</taxon>
        <taxon>rosids</taxon>
        <taxon>malvids</taxon>
        <taxon>Brassicales</taxon>
        <taxon>Brassicaceae</taxon>
        <taxon>Camelineae</taxon>
        <taxon>Arabidopsis</taxon>
    </lineage>
</organism>
<proteinExistence type="evidence at transcript level"/>
<accession>Q1PFD9</accession>
<accession>A0MEG1</accession>
<accession>Q9CAT0</accession>
<accession>Q9SSL4</accession>
<feature type="chain" id="PRO_0000425396" description="Protein trichome birefringence-like 31">
    <location>
        <begin position="1"/>
        <end position="413"/>
    </location>
</feature>
<feature type="transmembrane region" description="Helical; Signal-anchor for type II membrane protein" evidence="3">
    <location>
        <begin position="12"/>
        <end position="34"/>
    </location>
</feature>
<feature type="short sequence motif" description="GDS motif">
    <location>
        <begin position="141"/>
        <end position="143"/>
    </location>
</feature>
<feature type="short sequence motif" description="DCXHWCLPGXXDXWN motif">
    <location>
        <begin position="384"/>
        <end position="398"/>
    </location>
</feature>
<dbReference type="EMBL" id="AC008017">
    <property type="protein sequence ID" value="AAD55661.1"/>
    <property type="status" value="ALT_SEQ"/>
    <property type="molecule type" value="Genomic_DNA"/>
</dbReference>
<dbReference type="EMBL" id="AC010556">
    <property type="protein sequence ID" value="AAG52129.1"/>
    <property type="status" value="ALT_SEQ"/>
    <property type="molecule type" value="Genomic_DNA"/>
</dbReference>
<dbReference type="EMBL" id="CP002684">
    <property type="protein sequence ID" value="AEE35418.1"/>
    <property type="molecule type" value="Genomic_DNA"/>
</dbReference>
<dbReference type="EMBL" id="DQ446424">
    <property type="protein sequence ID" value="ABE65767.1"/>
    <property type="molecule type" value="mRNA"/>
</dbReference>
<dbReference type="EMBL" id="DQ652931">
    <property type="protein sequence ID" value="ABK28465.1"/>
    <property type="status" value="ALT_SEQ"/>
    <property type="molecule type" value="mRNA"/>
</dbReference>
<dbReference type="PIR" id="C96757">
    <property type="entry name" value="C96757"/>
</dbReference>
<dbReference type="RefSeq" id="NP_177457.2">
    <property type="nucleotide sequence ID" value="NM_105972.4"/>
</dbReference>
<dbReference type="SMR" id="Q1PFD9"/>
<dbReference type="FunCoup" id="Q1PFD9">
    <property type="interactions" value="7"/>
</dbReference>
<dbReference type="STRING" id="3702.Q1PFD9"/>
<dbReference type="PaxDb" id="3702-AT1G73140.1"/>
<dbReference type="ProteomicsDB" id="233016"/>
<dbReference type="EnsemblPlants" id="AT1G73140.1">
    <property type="protein sequence ID" value="AT1G73140.1"/>
    <property type="gene ID" value="AT1G73140"/>
</dbReference>
<dbReference type="GeneID" id="843645"/>
<dbReference type="Gramene" id="AT1G73140.1">
    <property type="protein sequence ID" value="AT1G73140.1"/>
    <property type="gene ID" value="AT1G73140"/>
</dbReference>
<dbReference type="KEGG" id="ath:AT1G73140"/>
<dbReference type="Araport" id="AT1G73140"/>
<dbReference type="TAIR" id="AT1G73140">
    <property type="gene designation" value="TBL31"/>
</dbReference>
<dbReference type="eggNOG" id="ENOG502QV20">
    <property type="taxonomic scope" value="Eukaryota"/>
</dbReference>
<dbReference type="HOGENOM" id="CLU_020953_3_1_1"/>
<dbReference type="InParanoid" id="Q1PFD9"/>
<dbReference type="OMA" id="LWSWEWR"/>
<dbReference type="OrthoDB" id="630188at2759"/>
<dbReference type="PhylomeDB" id="Q1PFD9"/>
<dbReference type="PRO" id="PR:Q1PFD9"/>
<dbReference type="Proteomes" id="UP000006548">
    <property type="component" value="Chromosome 1"/>
</dbReference>
<dbReference type="ExpressionAtlas" id="Q1PFD9">
    <property type="expression patterns" value="baseline and differential"/>
</dbReference>
<dbReference type="GO" id="GO:0005794">
    <property type="term" value="C:Golgi apparatus"/>
    <property type="evidence" value="ECO:0000314"/>
    <property type="project" value="TAIR"/>
</dbReference>
<dbReference type="GO" id="GO:0016020">
    <property type="term" value="C:membrane"/>
    <property type="evidence" value="ECO:0007669"/>
    <property type="project" value="UniProtKB-SubCell"/>
</dbReference>
<dbReference type="GO" id="GO:1990538">
    <property type="term" value="F:xylan O-acetyltransferase activity"/>
    <property type="evidence" value="ECO:0000315"/>
    <property type="project" value="TAIR"/>
</dbReference>
<dbReference type="GO" id="GO:0045492">
    <property type="term" value="P:xylan biosynthetic process"/>
    <property type="evidence" value="ECO:0000315"/>
    <property type="project" value="TAIR"/>
</dbReference>
<dbReference type="InterPro" id="IPR029962">
    <property type="entry name" value="TBL"/>
</dbReference>
<dbReference type="InterPro" id="IPR026057">
    <property type="entry name" value="TBL_C"/>
</dbReference>
<dbReference type="InterPro" id="IPR025846">
    <property type="entry name" value="TBL_N"/>
</dbReference>
<dbReference type="PANTHER" id="PTHR32285:SF217">
    <property type="entry name" value="PROTEIN TRICHOME BIREFRINGENCE-LIKE 31"/>
    <property type="match status" value="1"/>
</dbReference>
<dbReference type="PANTHER" id="PTHR32285">
    <property type="entry name" value="PROTEIN TRICHOME BIREFRINGENCE-LIKE 9-RELATED"/>
    <property type="match status" value="1"/>
</dbReference>
<dbReference type="Pfam" id="PF13839">
    <property type="entry name" value="PC-Esterase"/>
    <property type="match status" value="1"/>
</dbReference>
<dbReference type="Pfam" id="PF14416">
    <property type="entry name" value="PMR5N"/>
    <property type="match status" value="1"/>
</dbReference>
<sequence length="413" mass="48589">MSIQTTADSRMIQSIFQVVLVSLLVLGSVRWILDELKSKESRISKLYGFRQKEAVFVTKEDQLDESCNVFEGQWVWDNVSYPLYTEKSCPYLVKQTTCQRNGRPDSYYQNWRWKPSSCDLPRFNALKLLDVLRNKRLMFIGDSVQRSTFESMVCMVQSVIPEKKKSFHRIPPMKIFKAEEYNASIEYYWAPFIVESISDHATNHTVHKRLVKLDAIEKHSKSWEGVDVLVFESYVWWMHQPKINATYGDTSEVREYNVTTAYKMALETWAKWFKTKINSEKQKVFFTSMSPTHLWSWEWNPGSDGTCYDELYPIDKRSYWGTGSNQEIMKIVGDVLSRVGENVTFLNITQLSEYRKDGHTTVYGERRGKLLTKEQRADPKNYGDCIHWCLPGVPDTWNEILYAYLLRSHRNFF</sequence>